<proteinExistence type="predicted"/>
<organism>
    <name type="scientific">Chlamydia trachomatis serovar L2 (strain ATCC VR-902B / DSM 19102 / 434/Bu)</name>
    <dbReference type="NCBI Taxonomy" id="471472"/>
    <lineage>
        <taxon>Bacteria</taxon>
        <taxon>Pseudomonadati</taxon>
        <taxon>Chlamydiota</taxon>
        <taxon>Chlamydiia</taxon>
        <taxon>Chlamydiales</taxon>
        <taxon>Chlamydiaceae</taxon>
        <taxon>Chlamydia/Chlamydophila group</taxon>
        <taxon>Chlamydia</taxon>
    </lineage>
</organism>
<accession>B0BCM2</accession>
<accession>P08782</accession>
<accession>Q46429</accession>
<accession>Q46430</accession>
<feature type="chain" id="PRO_0000391799" description="Virulence plasmid protein pGP2-D">
    <location>
        <begin position="1"/>
        <end position="354"/>
    </location>
</feature>
<sequence length="354" mass="41425">MVNYSNCHFIKSPIHLENQKFGRRPGQSIKISPKLAQNGMVEVIGLDFLSSHYHALAAIQRLLTATNYKGNTKGVVLSRESNSFQFEGWIPRIRFTKTEFLEAYGVKRYKTSRNKYEFSGKEAETALEALYHLGHQPFLIVATRTRWTNGTQIVDRYQTLSPIIRIYEGWEGLTDEENIDIDLTPFNSPSTRKHKGFVVEPCPILVDQIESYFVIKPANVYQEIKMRFPNASKYAYTFIDWVITAAAKKRRKLTKDNSWPENLFLNVNVKSLAYILRMNRYICTRNWKKIELAIDKCIEIAIQLGWLSRRKRIEFLDSSKLSKKEILYLNKERFEEITKKSKEQMEQLEQESIN</sequence>
<gene>
    <name type="ordered locus">pL2-04</name>
</gene>
<protein>
    <recommendedName>
        <fullName>Virulence plasmid protein pGP2-D</fullName>
    </recommendedName>
    <alternativeName>
        <fullName>Protein P-4</fullName>
    </alternativeName>
</protein>
<comment type="miscellaneous">
    <text>PGP2-D is required for growth within mammalian cells.</text>
</comment>
<reference key="1">
    <citation type="journal article" date="1988" name="Mol. Microbiol.">
        <title>The structure of a plasmid of Chlamydia trachomatis believed to be required for growth within mammalian cells.</title>
        <authorList>
            <person name="Comanducci M."/>
            <person name="Ricci S."/>
            <person name="Ratti G."/>
        </authorList>
    </citation>
    <scope>NUCLEOTIDE SEQUENCE [GENOMIC DNA]</scope>
    <source>
        <plasmid>pLGV440</plasmid>
    </source>
</reference>
<reference key="2">
    <citation type="journal article" date="2008" name="Genome Res.">
        <title>Chlamydia trachomatis: genome sequence analysis of lymphogranuloma venereum isolates.</title>
        <authorList>
            <person name="Thomson N.R."/>
            <person name="Holden M.T.G."/>
            <person name="Carder C."/>
            <person name="Lennard N."/>
            <person name="Lockey S.J."/>
            <person name="Marsh P."/>
            <person name="Skipp P."/>
            <person name="O'Connor C.D."/>
            <person name="Goodhead I."/>
            <person name="Norbertzcak H."/>
            <person name="Harris B."/>
            <person name="Ormond D."/>
            <person name="Rance R."/>
            <person name="Quail M.A."/>
            <person name="Parkhill J."/>
            <person name="Stephens R.S."/>
            <person name="Clarke I.N."/>
        </authorList>
    </citation>
    <scope>NUCLEOTIDE SEQUENCE [LARGE SCALE GENOMIC DNA]</scope>
    <source>
        <strain>ATCC VR-902B / DSM 19102 / 434/Bu</strain>
        <plasmid>pL2</plasmid>
    </source>
</reference>
<dbReference type="EMBL" id="X07547">
    <property type="protein sequence ID" value="CAA30422.1"/>
    <property type="molecule type" value="Genomic_DNA"/>
</dbReference>
<dbReference type="EMBL" id="AM886278">
    <property type="protein sequence ID" value="CAP09060.1"/>
    <property type="molecule type" value="Genomic_DNA"/>
</dbReference>
<dbReference type="PIR" id="S02220">
    <property type="entry name" value="S02220"/>
</dbReference>
<dbReference type="RefSeq" id="YP_001654091.1">
    <property type="nucleotide sequence ID" value="NC_010286.1"/>
</dbReference>
<geneLocation type="plasmid">
    <name>pL2</name>
</geneLocation>
<geneLocation type="plasmid">
    <name>pLGV440</name>
</geneLocation>
<name>GP2D_CHLT2</name>
<keyword id="KW-0614">Plasmid</keyword>